<reference key="1">
    <citation type="submission" date="2009-01" db="EMBL/GenBank/DDBJ databases">
        <title>Complete sequence of chromosome of Methylobacterium nodulans ORS 2060.</title>
        <authorList>
            <consortium name="US DOE Joint Genome Institute"/>
            <person name="Lucas S."/>
            <person name="Copeland A."/>
            <person name="Lapidus A."/>
            <person name="Glavina del Rio T."/>
            <person name="Dalin E."/>
            <person name="Tice H."/>
            <person name="Bruce D."/>
            <person name="Goodwin L."/>
            <person name="Pitluck S."/>
            <person name="Sims D."/>
            <person name="Brettin T."/>
            <person name="Detter J.C."/>
            <person name="Han C."/>
            <person name="Larimer F."/>
            <person name="Land M."/>
            <person name="Hauser L."/>
            <person name="Kyrpides N."/>
            <person name="Ivanova N."/>
            <person name="Marx C.J."/>
            <person name="Richardson P."/>
        </authorList>
    </citation>
    <scope>NUCLEOTIDE SEQUENCE [LARGE SCALE GENOMIC DNA]</scope>
    <source>
        <strain>LMG 21967 / CNCM I-2342 / ORS 2060</strain>
    </source>
</reference>
<gene>
    <name evidence="1" type="primary">rplB</name>
    <name type="ordered locus">Mnod_1911</name>
</gene>
<accession>B8IS88</accession>
<comment type="function">
    <text evidence="1">One of the primary rRNA binding proteins. Required for association of the 30S and 50S subunits to form the 70S ribosome, for tRNA binding and peptide bond formation. It has been suggested to have peptidyltransferase activity; this is somewhat controversial. Makes several contacts with the 16S rRNA in the 70S ribosome.</text>
</comment>
<comment type="subunit">
    <text evidence="1">Part of the 50S ribosomal subunit. Forms a bridge to the 30S subunit in the 70S ribosome.</text>
</comment>
<comment type="similarity">
    <text evidence="1">Belongs to the universal ribosomal protein uL2 family.</text>
</comment>
<name>RL2_METNO</name>
<organism>
    <name type="scientific">Methylobacterium nodulans (strain LMG 21967 / CNCM I-2342 / ORS 2060)</name>
    <dbReference type="NCBI Taxonomy" id="460265"/>
    <lineage>
        <taxon>Bacteria</taxon>
        <taxon>Pseudomonadati</taxon>
        <taxon>Pseudomonadota</taxon>
        <taxon>Alphaproteobacteria</taxon>
        <taxon>Hyphomicrobiales</taxon>
        <taxon>Methylobacteriaceae</taxon>
        <taxon>Methylobacterium</taxon>
    </lineage>
</organism>
<dbReference type="EMBL" id="CP001349">
    <property type="protein sequence ID" value="ACL56900.1"/>
    <property type="molecule type" value="Genomic_DNA"/>
</dbReference>
<dbReference type="RefSeq" id="WP_015928589.1">
    <property type="nucleotide sequence ID" value="NC_011894.1"/>
</dbReference>
<dbReference type="SMR" id="B8IS88"/>
<dbReference type="STRING" id="460265.Mnod_1911"/>
<dbReference type="KEGG" id="mno:Mnod_1911"/>
<dbReference type="eggNOG" id="COG0090">
    <property type="taxonomic scope" value="Bacteria"/>
</dbReference>
<dbReference type="HOGENOM" id="CLU_036235_2_1_5"/>
<dbReference type="OrthoDB" id="9778722at2"/>
<dbReference type="Proteomes" id="UP000008207">
    <property type="component" value="Chromosome"/>
</dbReference>
<dbReference type="GO" id="GO:0015934">
    <property type="term" value="C:large ribosomal subunit"/>
    <property type="evidence" value="ECO:0007669"/>
    <property type="project" value="InterPro"/>
</dbReference>
<dbReference type="GO" id="GO:0019843">
    <property type="term" value="F:rRNA binding"/>
    <property type="evidence" value="ECO:0007669"/>
    <property type="project" value="UniProtKB-UniRule"/>
</dbReference>
<dbReference type="GO" id="GO:0003735">
    <property type="term" value="F:structural constituent of ribosome"/>
    <property type="evidence" value="ECO:0007669"/>
    <property type="project" value="InterPro"/>
</dbReference>
<dbReference type="GO" id="GO:0016740">
    <property type="term" value="F:transferase activity"/>
    <property type="evidence" value="ECO:0007669"/>
    <property type="project" value="InterPro"/>
</dbReference>
<dbReference type="GO" id="GO:0002181">
    <property type="term" value="P:cytoplasmic translation"/>
    <property type="evidence" value="ECO:0007669"/>
    <property type="project" value="TreeGrafter"/>
</dbReference>
<dbReference type="FunFam" id="2.30.30.30:FF:000055">
    <property type="entry name" value="50S ribosomal protein L2"/>
    <property type="match status" value="1"/>
</dbReference>
<dbReference type="FunFam" id="4.10.950.10:FF:000001">
    <property type="entry name" value="50S ribosomal protein L2"/>
    <property type="match status" value="1"/>
</dbReference>
<dbReference type="Gene3D" id="2.30.30.30">
    <property type="match status" value="1"/>
</dbReference>
<dbReference type="Gene3D" id="2.40.50.140">
    <property type="entry name" value="Nucleic acid-binding proteins"/>
    <property type="match status" value="1"/>
</dbReference>
<dbReference type="Gene3D" id="4.10.950.10">
    <property type="entry name" value="Ribosomal protein L2, domain 3"/>
    <property type="match status" value="1"/>
</dbReference>
<dbReference type="HAMAP" id="MF_01320_B">
    <property type="entry name" value="Ribosomal_uL2_B"/>
    <property type="match status" value="1"/>
</dbReference>
<dbReference type="InterPro" id="IPR012340">
    <property type="entry name" value="NA-bd_OB-fold"/>
</dbReference>
<dbReference type="InterPro" id="IPR014722">
    <property type="entry name" value="Rib_uL2_dom2"/>
</dbReference>
<dbReference type="InterPro" id="IPR002171">
    <property type="entry name" value="Ribosomal_uL2"/>
</dbReference>
<dbReference type="InterPro" id="IPR005880">
    <property type="entry name" value="Ribosomal_uL2_bac/org-type"/>
</dbReference>
<dbReference type="InterPro" id="IPR022669">
    <property type="entry name" value="Ribosomal_uL2_C"/>
</dbReference>
<dbReference type="InterPro" id="IPR022671">
    <property type="entry name" value="Ribosomal_uL2_CS"/>
</dbReference>
<dbReference type="InterPro" id="IPR014726">
    <property type="entry name" value="Ribosomal_uL2_dom3"/>
</dbReference>
<dbReference type="InterPro" id="IPR022666">
    <property type="entry name" value="Ribosomal_uL2_RNA-bd_dom"/>
</dbReference>
<dbReference type="InterPro" id="IPR008991">
    <property type="entry name" value="Translation_prot_SH3-like_sf"/>
</dbReference>
<dbReference type="NCBIfam" id="TIGR01171">
    <property type="entry name" value="rplB_bact"/>
    <property type="match status" value="1"/>
</dbReference>
<dbReference type="PANTHER" id="PTHR13691:SF5">
    <property type="entry name" value="LARGE RIBOSOMAL SUBUNIT PROTEIN UL2M"/>
    <property type="match status" value="1"/>
</dbReference>
<dbReference type="PANTHER" id="PTHR13691">
    <property type="entry name" value="RIBOSOMAL PROTEIN L2"/>
    <property type="match status" value="1"/>
</dbReference>
<dbReference type="Pfam" id="PF00181">
    <property type="entry name" value="Ribosomal_L2"/>
    <property type="match status" value="1"/>
</dbReference>
<dbReference type="Pfam" id="PF03947">
    <property type="entry name" value="Ribosomal_L2_C"/>
    <property type="match status" value="1"/>
</dbReference>
<dbReference type="PIRSF" id="PIRSF002158">
    <property type="entry name" value="Ribosomal_L2"/>
    <property type="match status" value="1"/>
</dbReference>
<dbReference type="SMART" id="SM01383">
    <property type="entry name" value="Ribosomal_L2"/>
    <property type="match status" value="1"/>
</dbReference>
<dbReference type="SMART" id="SM01382">
    <property type="entry name" value="Ribosomal_L2_C"/>
    <property type="match status" value="1"/>
</dbReference>
<dbReference type="SUPFAM" id="SSF50249">
    <property type="entry name" value="Nucleic acid-binding proteins"/>
    <property type="match status" value="1"/>
</dbReference>
<dbReference type="SUPFAM" id="SSF50104">
    <property type="entry name" value="Translation proteins SH3-like domain"/>
    <property type="match status" value="1"/>
</dbReference>
<dbReference type="PROSITE" id="PS00467">
    <property type="entry name" value="RIBOSOMAL_L2"/>
    <property type="match status" value="1"/>
</dbReference>
<protein>
    <recommendedName>
        <fullName evidence="1">Large ribosomal subunit protein uL2</fullName>
    </recommendedName>
    <alternativeName>
        <fullName evidence="3">50S ribosomal protein L2</fullName>
    </alternativeName>
</protein>
<proteinExistence type="inferred from homology"/>
<keyword id="KW-1185">Reference proteome</keyword>
<keyword id="KW-0687">Ribonucleoprotein</keyword>
<keyword id="KW-0689">Ribosomal protein</keyword>
<keyword id="KW-0694">RNA-binding</keyword>
<keyword id="KW-0699">rRNA-binding</keyword>
<sequence>MALKTFKPVTPSLRQLVIVDRSELYKGKPVKALTEGKISSGGRNNLGRVTVRFRGGGHKRTLRNVDFKRREHAGKVGTVERIEYDPNRTAFIALVTYEGGAQSYILAPQRVKAGDKVVSGDSVDIKPGNAMPIGNMPVGTIVHNVELKIGKGGAIARSAGNYAQIVGRDQGYVTLRLNSGEQRLVHGQCYATVGAVSNPDHMNISLGKAGRKRWLGRRPHNRGVAMNPIDHPHGGGEGRTSGGRHPVTPWGFPTKGKKTRSNKRTDTFIVSSRHNRKK</sequence>
<evidence type="ECO:0000255" key="1">
    <source>
        <dbReference type="HAMAP-Rule" id="MF_01320"/>
    </source>
</evidence>
<evidence type="ECO:0000256" key="2">
    <source>
        <dbReference type="SAM" id="MobiDB-lite"/>
    </source>
</evidence>
<evidence type="ECO:0000305" key="3"/>
<feature type="chain" id="PRO_1000165757" description="Large ribosomal subunit protein uL2">
    <location>
        <begin position="1"/>
        <end position="278"/>
    </location>
</feature>
<feature type="region of interest" description="Disordered" evidence="2">
    <location>
        <begin position="223"/>
        <end position="278"/>
    </location>
</feature>